<gene>
    <name evidence="3" type="ORF">BcepMu34</name>
</gene>
<name>CAPSD_BPBMU</name>
<organismHost>
    <name type="scientific">Burkholderia cenocepacia (strain ATCC BAA-245 / DSM 16553 / LMG 16656 / NCTC 13227 / J2315 / CF5610)</name>
    <name type="common">Burkholderia cepacia (strain J2315)</name>
    <dbReference type="NCBI Taxonomy" id="216591"/>
</organismHost>
<sequence>MGRLSKLRIVDPVLTNLAIGYTNAEFIGQSLMPVVEVEKEGGKIPKFGKESFRLYKTERALRARSNRMNPEDLGSIDIVLDEHDLEYPIDYREDQESAFPLEQAAVQTATEAIQLRREKMVADLAQNPNSYAGGNKKQLSATEKFTAAGSDPVGVIEDGKEAIRTKIGRRPNTMVIGASAYKTLKAHPQLIEKIKYSMKGIVTVDLLKEIFEVENIAVGEAIYADDKDRFTDIWGANIVLAYVPLQRGGQQRTPYEPSYGYTLRKKGNPVVDTRIEDGKLELVRSTDIFRPYLLGADAGYLISGING</sequence>
<evidence type="ECO:0000250" key="1">
    <source>
        <dbReference type="UniProtKB" id="P03713"/>
    </source>
</evidence>
<evidence type="ECO:0000305" key="2"/>
<evidence type="ECO:0000312" key="3">
    <source>
        <dbReference type="EMBL" id="AAS47873.1"/>
    </source>
</evidence>
<evidence type="ECO:0000312" key="4">
    <source>
        <dbReference type="Proteomes" id="UP000011237"/>
    </source>
</evidence>
<comment type="function">
    <text evidence="1">Assembles to form an icosahedral capsid.</text>
</comment>
<comment type="subcellular location">
    <subcellularLocation>
        <location evidence="1">Virion</location>
    </subcellularLocation>
    <subcellularLocation>
        <location evidence="1">Host cytoplasm</location>
    </subcellularLocation>
    <text evidence="1">Forms the capsid icosahedric shell.</text>
</comment>
<comment type="similarity">
    <text evidence="2">Belongs to the lambda phage major capsid protein family.</text>
</comment>
<accession>Q6QIB5</accession>
<feature type="chain" id="PRO_0000432351" description="Major capsid protein">
    <location>
        <begin position="1"/>
        <end position="307"/>
    </location>
</feature>
<organism>
    <name type="scientific">Burkholderia phage BcepMu (isolate -/United States/Summer/2002)</name>
    <name type="common">Bacteriophage BcepMu</name>
    <dbReference type="NCBI Taxonomy" id="1283335"/>
    <lineage>
        <taxon>Viruses</taxon>
        <taxon>Duplodnaviria</taxon>
        <taxon>Heunggongvirae</taxon>
        <taxon>Uroviricota</taxon>
        <taxon>Caudoviricetes</taxon>
        <taxon>Bcepmuvirus</taxon>
        <taxon>Bcepmuvirus bcepMu</taxon>
    </lineage>
</organism>
<reference key="1">
    <citation type="journal article" date="2004" name="J. Mol. Biol.">
        <title>Burkholderia cenocepacia phage BcepMu and a family of Mu-like phages encoding potential pathogenesis factors.</title>
        <authorList>
            <person name="Summer E.J."/>
            <person name="Gonzalez C.F."/>
            <person name="Carlisle T."/>
            <person name="Mebane L.M."/>
            <person name="Cass A.M."/>
            <person name="Savva C.G."/>
            <person name="LiPuma J."/>
            <person name="Young R."/>
        </authorList>
    </citation>
    <scope>NUCLEOTIDE SEQUENCE [GENOMIC DNA]</scope>
    <source>
        <strain evidence="4">Isolate -/United States/Summer/2002</strain>
    </source>
</reference>
<proteinExistence type="inferred from homology"/>
<protein>
    <recommendedName>
        <fullName evidence="1">Major capsid protein</fullName>
    </recommendedName>
    <alternativeName>
        <fullName evidence="2">Gene product 34</fullName>
        <shortName evidence="2">gp34</shortName>
    </alternativeName>
    <alternativeName>
        <fullName evidence="1">Major head protein</fullName>
    </alternativeName>
</protein>
<keyword id="KW-0167">Capsid protein</keyword>
<keyword id="KW-1035">Host cytoplasm</keyword>
<keyword id="KW-0426">Late protein</keyword>
<keyword id="KW-1185">Reference proteome</keyword>
<keyword id="KW-0946">Virion</keyword>
<dbReference type="EMBL" id="AY539836">
    <property type="protein sequence ID" value="AAS47873.1"/>
    <property type="molecule type" value="Genomic_DNA"/>
</dbReference>
<dbReference type="RefSeq" id="YP_024707.1">
    <property type="nucleotide sequence ID" value="NC_005882.1"/>
</dbReference>
<dbReference type="SMR" id="Q6QIB5"/>
<dbReference type="GeneID" id="2845970"/>
<dbReference type="KEGG" id="vg:2845970"/>
<dbReference type="Proteomes" id="UP000011237">
    <property type="component" value="Segment"/>
</dbReference>
<dbReference type="GO" id="GO:0030430">
    <property type="term" value="C:host cell cytoplasm"/>
    <property type="evidence" value="ECO:0007669"/>
    <property type="project" value="UniProtKB-SubCell"/>
</dbReference>
<dbReference type="GO" id="GO:0019028">
    <property type="term" value="C:viral capsid"/>
    <property type="evidence" value="ECO:0007669"/>
    <property type="project" value="UniProtKB-KW"/>
</dbReference>
<dbReference type="Gene3D" id="3.90.1690.10">
    <property type="entry name" value="phage-related protein like domain"/>
    <property type="match status" value="1"/>
</dbReference>
<dbReference type="InterPro" id="IPR053738">
    <property type="entry name" value="Lambda_capsid_assembly"/>
</dbReference>